<reference key="1">
    <citation type="journal article" date="2004" name="Genome Res.">
        <title>The genomic sequence and comparative analysis of the rat major histocompatibility complex.</title>
        <authorList>
            <person name="Hurt P."/>
            <person name="Walter L."/>
            <person name="Sudbrak R."/>
            <person name="Klages S."/>
            <person name="Mueller I."/>
            <person name="Shiina T."/>
            <person name="Inoko H."/>
            <person name="Lehrach H."/>
            <person name="Guenther E."/>
            <person name="Reinhardt R."/>
            <person name="Himmelbauer H."/>
        </authorList>
    </citation>
    <scope>NUCLEOTIDE SEQUENCE [LARGE SCALE GENOMIC DNA]</scope>
    <source>
        <strain>Brown Norway</strain>
    </source>
</reference>
<reference key="2">
    <citation type="journal article" date="2004" name="Genome Res.">
        <title>The status, quality, and expansion of the NIH full-length cDNA project: the Mammalian Gene Collection (MGC).</title>
        <authorList>
            <consortium name="The MGC Project Team"/>
        </authorList>
    </citation>
    <scope>NUCLEOTIDE SEQUENCE [LARGE SCALE MRNA]</scope>
    <source>
        <tissue>Kidney</tissue>
    </source>
</reference>
<reference key="3">
    <citation type="journal article" date="2005" name="J. Neurochem.">
        <title>Molecular characterization of the family of choline transporter-like proteins and their splice variants.</title>
        <authorList>
            <person name="Traiffort E."/>
            <person name="Ruat M."/>
            <person name="O'Regan S."/>
            <person name="Meunier F.-M."/>
        </authorList>
    </citation>
    <scope>TISSUE SPECIFICITY</scope>
    <source>
        <strain>Wistar</strain>
        <tissue>Brain</tissue>
    </source>
</reference>
<dbReference type="EMBL" id="BX883045">
    <property type="protein sequence ID" value="CAE83975.1"/>
    <property type="molecule type" value="Genomic_DNA"/>
</dbReference>
<dbReference type="EMBL" id="BC079178">
    <property type="protein sequence ID" value="AAH79178.1"/>
    <property type="molecule type" value="mRNA"/>
</dbReference>
<dbReference type="RefSeq" id="NP_997706.1">
    <property type="nucleotide sequence ID" value="NM_212541.1"/>
</dbReference>
<dbReference type="RefSeq" id="XP_063135082.1">
    <property type="nucleotide sequence ID" value="XM_063279012.1"/>
</dbReference>
<dbReference type="SMR" id="Q6MG71"/>
<dbReference type="FunCoup" id="Q6MG71">
    <property type="interactions" value="124"/>
</dbReference>
<dbReference type="STRING" id="10116.ENSRNOP00000001174"/>
<dbReference type="GlyCosmos" id="Q6MG71">
    <property type="glycosylation" value="8 sites, No reported glycans"/>
</dbReference>
<dbReference type="GlyGen" id="Q6MG71">
    <property type="glycosylation" value="8 sites"/>
</dbReference>
<dbReference type="PhosphoSitePlus" id="Q6MG71"/>
<dbReference type="PaxDb" id="10116-ENSRNOP00000001174"/>
<dbReference type="Ensembl" id="ENSRNOT00000001174.6">
    <property type="protein sequence ID" value="ENSRNOP00000001174.4"/>
    <property type="gene ID" value="ENSRNOG00000000878.8"/>
</dbReference>
<dbReference type="GeneID" id="294255"/>
<dbReference type="KEGG" id="rno:294255"/>
<dbReference type="UCSC" id="RGD:1303167">
    <property type="organism name" value="rat"/>
</dbReference>
<dbReference type="AGR" id="RGD:1303167"/>
<dbReference type="CTD" id="80736"/>
<dbReference type="RGD" id="1303167">
    <property type="gene designation" value="Slc44a4"/>
</dbReference>
<dbReference type="eggNOG" id="KOG1362">
    <property type="taxonomic scope" value="Eukaryota"/>
</dbReference>
<dbReference type="GeneTree" id="ENSGT00940000160576"/>
<dbReference type="HOGENOM" id="CLU_017181_3_1_1"/>
<dbReference type="InParanoid" id="Q6MG71"/>
<dbReference type="OMA" id="SFCNSAY"/>
<dbReference type="OrthoDB" id="82473at9989"/>
<dbReference type="PhylomeDB" id="Q6MG71"/>
<dbReference type="Reactome" id="R-RNO-1483191">
    <property type="pathway name" value="Synthesis of PC"/>
</dbReference>
<dbReference type="Reactome" id="R-RNO-425366">
    <property type="pathway name" value="Transport of bile salts and organic acids, metal ions and amine compounds"/>
</dbReference>
<dbReference type="PRO" id="PR:Q6MG71"/>
<dbReference type="Proteomes" id="UP000002494">
    <property type="component" value="Chromosome 20"/>
</dbReference>
<dbReference type="Bgee" id="ENSRNOG00000000878">
    <property type="expression patterns" value="Expressed in jejunum and 13 other cell types or tissues"/>
</dbReference>
<dbReference type="GO" id="GO:0016324">
    <property type="term" value="C:apical plasma membrane"/>
    <property type="evidence" value="ECO:0000250"/>
    <property type="project" value="UniProtKB"/>
</dbReference>
<dbReference type="GO" id="GO:0005886">
    <property type="term" value="C:plasma membrane"/>
    <property type="evidence" value="ECO:0000266"/>
    <property type="project" value="RGD"/>
</dbReference>
<dbReference type="GO" id="GO:0015297">
    <property type="term" value="F:antiporter activity"/>
    <property type="evidence" value="ECO:0007669"/>
    <property type="project" value="UniProtKB-KW"/>
</dbReference>
<dbReference type="GO" id="GO:0015220">
    <property type="term" value="F:choline transmembrane transporter activity"/>
    <property type="evidence" value="ECO:0000250"/>
    <property type="project" value="UniProtKB"/>
</dbReference>
<dbReference type="GO" id="GO:0090422">
    <property type="term" value="F:thiamine pyrophosphate transmembrane transporter activity"/>
    <property type="evidence" value="ECO:0000250"/>
    <property type="project" value="UniProtKB"/>
</dbReference>
<dbReference type="GO" id="GO:0008292">
    <property type="term" value="P:acetylcholine biosynthetic process"/>
    <property type="evidence" value="ECO:0000250"/>
    <property type="project" value="UniProtKB"/>
</dbReference>
<dbReference type="GO" id="GO:0061526">
    <property type="term" value="P:acetylcholine secretion"/>
    <property type="evidence" value="ECO:0000250"/>
    <property type="project" value="UniProtKB"/>
</dbReference>
<dbReference type="GO" id="GO:0015871">
    <property type="term" value="P:choline transport"/>
    <property type="evidence" value="ECO:0000250"/>
    <property type="project" value="UniProtKB"/>
</dbReference>
<dbReference type="GO" id="GO:0035675">
    <property type="term" value="P:neuromast hair cell development"/>
    <property type="evidence" value="ECO:0000250"/>
    <property type="project" value="UniProtKB"/>
</dbReference>
<dbReference type="GO" id="GO:0032475">
    <property type="term" value="P:otolith formation"/>
    <property type="evidence" value="ECO:0000250"/>
    <property type="project" value="UniProtKB"/>
</dbReference>
<dbReference type="GO" id="GO:0030307">
    <property type="term" value="P:positive regulation of cell growth"/>
    <property type="evidence" value="ECO:0000250"/>
    <property type="project" value="UniProtKB"/>
</dbReference>
<dbReference type="GO" id="GO:0030974">
    <property type="term" value="P:thiamine pyrophosphate transmembrane transport"/>
    <property type="evidence" value="ECO:0000250"/>
    <property type="project" value="UniProtKB"/>
</dbReference>
<dbReference type="InterPro" id="IPR007603">
    <property type="entry name" value="Choline_transptr-like"/>
</dbReference>
<dbReference type="PANTHER" id="PTHR12385">
    <property type="entry name" value="CHOLINE TRANSPORTER-LIKE (SLC FAMILY 44)"/>
    <property type="match status" value="1"/>
</dbReference>
<dbReference type="PANTHER" id="PTHR12385:SF37">
    <property type="entry name" value="CHOLINE TRANSPORTER-LIKE PROTEIN 4"/>
    <property type="match status" value="1"/>
</dbReference>
<dbReference type="Pfam" id="PF04515">
    <property type="entry name" value="Choline_transpo"/>
    <property type="match status" value="1"/>
</dbReference>
<sequence>MGKKQKENEAYGNSAKYDPSFRGPIKNRGCTDIICCVLFLVFILGYIVVGLVAWVYGDPRQVLYPRNSTGAYCGVGDNKDKPYVLYFNILSCAAAINVISIAENGLQCPTPQVCVSSCPQTPWVVEGFQLSNTVGDVYKEYRNFCVPAVSPDMVVMDSLQKGLCPSFLLPSTPALGRCFPLPNINFTLPEQLQINNTTVSKGISGLLDSINARDVSVKIFEDFAQSWYWILVALGVALVLSLLFILLLRLVAAPLVLLLIVGVLAVLAYGIYHCWQQYRELRDQGVSITQLGFTANLSAYQNVKETWLAALIILAVLEGVLLLMLIFLRQRIRIAIALLKEASRAVGQMMSTMFYPLVTFVLLVICIGYWAVTALYLATSGQPQYVYWVHNTSTPGCEKVLVNVSCDPMAPLNSSCPELKCTFTGYSSSGLAQRSLFNLQIYGILGLFWTVNWVLALGQCVLAGAFASFYWAFHKPRDIPTFPLSSAFIRTLRYHTGSLAFGALILTLVQIARVILEYIDHKLRGSQNPVARCIICCFKCCLWCLEKFIKFLNRNAYIMIAIYGKNFCVSAKNAFMLLMRNVVRVVVLDKVTDLLLFFGKLLVVGGVGVLSFFFFSGRIKGLGKDFKNPDLNYYWLPIMTSIMGAYVIASGFFSVFGMCVDTLFLCFLEDLERNDGSQERPYYMPKALLKILGKKNEVPTGGKNRKK</sequence>
<comment type="function">
    <text evidence="1 2">Choline transporter that plays a role in the choline-acetylcholine system and is required to the efferent innervation of hair cells in the olivocochlear bundle for the maintenance of physiological function of outer hair cells and the protection of hair cells from acoustic injury (By similarity). Also described as a thiamine pyrophosphate transporter in colon, may mediate the absorption of microbiota-generated thiamine pyrophosphate and contribute to host thiamine (vitamin B1) homeostasis (By similarity).</text>
</comment>
<comment type="catalytic activity">
    <reaction evidence="1">
        <text>choline(out) + n H(+)(in) = choline(in) + n H(+)(out)</text>
        <dbReference type="Rhea" id="RHEA:75463"/>
        <dbReference type="ChEBI" id="CHEBI:15354"/>
        <dbReference type="ChEBI" id="CHEBI:15378"/>
    </reaction>
</comment>
<comment type="catalytic activity">
    <reaction evidence="1">
        <text>thiamine diphosphate(out) = thiamine diphosphate(in)</text>
        <dbReference type="Rhea" id="RHEA:75471"/>
        <dbReference type="ChEBI" id="CHEBI:58937"/>
    </reaction>
</comment>
<comment type="subcellular location">
    <subcellularLocation>
        <location evidence="1">Membrane</location>
        <topology evidence="1">Multi-pass membrane protein</topology>
    </subcellularLocation>
    <subcellularLocation>
        <location evidence="1">Apical cell membrane</location>
    </subcellularLocation>
</comment>
<comment type="tissue specificity">
    <text evidence="4">Highly expressed in intestine, kidney and stomach. Also expressed in testis and lung.</text>
</comment>
<comment type="PTM">
    <text evidence="1">N-glycosylated; N-glycosylation of Asn-67 and Asn-391 is required for a proper thiamine pyrophosphate uptake.</text>
</comment>
<comment type="similarity">
    <text evidence="5">Belongs to the CTL (choline transporter-like) family.</text>
</comment>
<accession>Q6MG71</accession>
<name>CTL4_RAT</name>
<keyword id="KW-0050">Antiport</keyword>
<keyword id="KW-1003">Cell membrane</keyword>
<keyword id="KW-0325">Glycoprotein</keyword>
<keyword id="KW-0472">Membrane</keyword>
<keyword id="KW-1185">Reference proteome</keyword>
<keyword id="KW-0812">Transmembrane</keyword>
<keyword id="KW-1133">Transmembrane helix</keyword>
<keyword id="KW-0813">Transport</keyword>
<feature type="chain" id="PRO_0000191725" description="Choline transporter-like protein 4">
    <location>
        <begin position="1"/>
        <end position="707"/>
    </location>
</feature>
<feature type="topological domain" description="Cytoplasmic" evidence="3">
    <location>
        <begin position="1"/>
        <end position="32"/>
    </location>
</feature>
<feature type="transmembrane region" description="Helical" evidence="3">
    <location>
        <begin position="33"/>
        <end position="53"/>
    </location>
</feature>
<feature type="topological domain" description="Extracellular" evidence="3">
    <location>
        <begin position="54"/>
        <end position="227"/>
    </location>
</feature>
<feature type="transmembrane region" description="Helical" evidence="3">
    <location>
        <begin position="228"/>
        <end position="248"/>
    </location>
</feature>
<feature type="topological domain" description="Cytoplasmic" evidence="3">
    <location>
        <begin position="249"/>
        <end position="250"/>
    </location>
</feature>
<feature type="transmembrane region" description="Helical" evidence="3">
    <location>
        <begin position="251"/>
        <end position="271"/>
    </location>
</feature>
<feature type="topological domain" description="Extracellular" evidence="3">
    <location>
        <begin position="272"/>
        <end position="307"/>
    </location>
</feature>
<feature type="transmembrane region" description="Helical" evidence="3">
    <location>
        <begin position="308"/>
        <end position="328"/>
    </location>
</feature>
<feature type="topological domain" description="Cytoplasmic" evidence="3">
    <location>
        <begin position="329"/>
        <end position="356"/>
    </location>
</feature>
<feature type="transmembrane region" description="Helical" evidence="3">
    <location>
        <begin position="357"/>
        <end position="377"/>
    </location>
</feature>
<feature type="topological domain" description="Extracellular" evidence="3">
    <location>
        <begin position="378"/>
        <end position="452"/>
    </location>
</feature>
<feature type="transmembrane region" description="Helical" evidence="3">
    <location>
        <begin position="453"/>
        <end position="473"/>
    </location>
</feature>
<feature type="topological domain" description="Cytoplasmic" evidence="3">
    <location>
        <begin position="474"/>
        <end position="498"/>
    </location>
</feature>
<feature type="transmembrane region" description="Helical" evidence="3">
    <location>
        <begin position="499"/>
        <end position="519"/>
    </location>
</feature>
<feature type="topological domain" description="Extracellular" evidence="3">
    <location>
        <begin position="520"/>
        <end position="557"/>
    </location>
</feature>
<feature type="transmembrane region" description="Helical" evidence="3">
    <location>
        <begin position="558"/>
        <end position="578"/>
    </location>
</feature>
<feature type="topological domain" description="Cytoplasmic" evidence="3">
    <location>
        <begin position="579"/>
        <end position="594"/>
    </location>
</feature>
<feature type="transmembrane region" description="Helical" evidence="3">
    <location>
        <begin position="595"/>
        <end position="615"/>
    </location>
</feature>
<feature type="topological domain" description="Extracellular" evidence="3">
    <location>
        <begin position="616"/>
        <end position="635"/>
    </location>
</feature>
<feature type="transmembrane region" description="Helical" evidence="3">
    <location>
        <begin position="636"/>
        <end position="656"/>
    </location>
</feature>
<feature type="topological domain" description="Cytoplasmic" evidence="3">
    <location>
        <begin position="657"/>
        <end position="707"/>
    </location>
</feature>
<feature type="glycosylation site" description="N-linked (GlcNAc...) asparagine" evidence="1">
    <location>
        <position position="67"/>
    </location>
</feature>
<feature type="glycosylation site" description="N-linked (GlcNAc...) asparagine" evidence="3">
    <location>
        <position position="185"/>
    </location>
</feature>
<feature type="glycosylation site" description="N-linked (GlcNAc...) asparagine" evidence="3">
    <location>
        <position position="195"/>
    </location>
</feature>
<feature type="glycosylation site" description="N-linked (GlcNAc...) asparagine" evidence="1">
    <location>
        <position position="196"/>
    </location>
</feature>
<feature type="glycosylation site" description="N-linked (GlcNAc...) asparagine" evidence="3">
    <location>
        <position position="296"/>
    </location>
</feature>
<feature type="glycosylation site" description="N-linked (GlcNAc...) asparagine" evidence="1">
    <location>
        <position position="391"/>
    </location>
</feature>
<feature type="glycosylation site" description="N-linked (GlcNAc...) asparagine" evidence="3">
    <location>
        <position position="403"/>
    </location>
</feature>
<feature type="glycosylation site" description="N-linked (GlcNAc...) asparagine" evidence="1">
    <location>
        <position position="413"/>
    </location>
</feature>
<evidence type="ECO:0000250" key="1">
    <source>
        <dbReference type="UniProtKB" id="Q53GD3"/>
    </source>
</evidence>
<evidence type="ECO:0000250" key="2">
    <source>
        <dbReference type="UniProtKB" id="Q7T2B0"/>
    </source>
</evidence>
<evidence type="ECO:0000255" key="3"/>
<evidence type="ECO:0000269" key="4">
    <source>
    </source>
</evidence>
<evidence type="ECO:0000305" key="5"/>
<evidence type="ECO:0000312" key="6">
    <source>
        <dbReference type="RGD" id="1303167"/>
    </source>
</evidence>
<protein>
    <recommendedName>
        <fullName>Choline transporter-like protein 4</fullName>
    </recommendedName>
    <alternativeName>
        <fullName>Solute carrier family 44 member 4</fullName>
    </alternativeName>
    <alternativeName>
        <fullName evidence="1">Thiamine pyrophosphate transporter 1</fullName>
    </alternativeName>
</protein>
<gene>
    <name evidence="6" type="primary">Slc44a4</name>
    <name type="synonym">Ctl4</name>
    <name type="synonym">Ng22</name>
    <name evidence="1" type="synonym">TPPT1</name>
</gene>
<proteinExistence type="evidence at transcript level"/>
<organism>
    <name type="scientific">Rattus norvegicus</name>
    <name type="common">Rat</name>
    <dbReference type="NCBI Taxonomy" id="10116"/>
    <lineage>
        <taxon>Eukaryota</taxon>
        <taxon>Metazoa</taxon>
        <taxon>Chordata</taxon>
        <taxon>Craniata</taxon>
        <taxon>Vertebrata</taxon>
        <taxon>Euteleostomi</taxon>
        <taxon>Mammalia</taxon>
        <taxon>Eutheria</taxon>
        <taxon>Euarchontoglires</taxon>
        <taxon>Glires</taxon>
        <taxon>Rodentia</taxon>
        <taxon>Myomorpha</taxon>
        <taxon>Muroidea</taxon>
        <taxon>Muridae</taxon>
        <taxon>Murinae</taxon>
        <taxon>Rattus</taxon>
    </lineage>
</organism>